<organism>
    <name type="scientific">Escherichia coli (strain SE11)</name>
    <dbReference type="NCBI Taxonomy" id="409438"/>
    <lineage>
        <taxon>Bacteria</taxon>
        <taxon>Pseudomonadati</taxon>
        <taxon>Pseudomonadota</taxon>
        <taxon>Gammaproteobacteria</taxon>
        <taxon>Enterobacterales</taxon>
        <taxon>Enterobacteriaceae</taxon>
        <taxon>Escherichia</taxon>
    </lineage>
</organism>
<dbReference type="EC" id="2.2.1.7" evidence="1"/>
<dbReference type="EMBL" id="AP009240">
    <property type="protein sequence ID" value="BAG75966.1"/>
    <property type="molecule type" value="Genomic_DNA"/>
</dbReference>
<dbReference type="RefSeq" id="WP_000006806.1">
    <property type="nucleotide sequence ID" value="NC_011415.1"/>
</dbReference>
<dbReference type="SMR" id="B6HZM1"/>
<dbReference type="KEGG" id="ecy:ECSE_0442"/>
<dbReference type="HOGENOM" id="CLU_009227_1_4_6"/>
<dbReference type="UniPathway" id="UPA00064">
    <property type="reaction ID" value="UER00091"/>
</dbReference>
<dbReference type="Proteomes" id="UP000008199">
    <property type="component" value="Chromosome"/>
</dbReference>
<dbReference type="GO" id="GO:0005829">
    <property type="term" value="C:cytosol"/>
    <property type="evidence" value="ECO:0007669"/>
    <property type="project" value="TreeGrafter"/>
</dbReference>
<dbReference type="GO" id="GO:0008661">
    <property type="term" value="F:1-deoxy-D-xylulose-5-phosphate synthase activity"/>
    <property type="evidence" value="ECO:0007669"/>
    <property type="project" value="UniProtKB-UniRule"/>
</dbReference>
<dbReference type="GO" id="GO:0000287">
    <property type="term" value="F:magnesium ion binding"/>
    <property type="evidence" value="ECO:0007669"/>
    <property type="project" value="UniProtKB-UniRule"/>
</dbReference>
<dbReference type="GO" id="GO:0030976">
    <property type="term" value="F:thiamine pyrophosphate binding"/>
    <property type="evidence" value="ECO:0007669"/>
    <property type="project" value="UniProtKB-UniRule"/>
</dbReference>
<dbReference type="GO" id="GO:0052865">
    <property type="term" value="P:1-deoxy-D-xylulose 5-phosphate biosynthetic process"/>
    <property type="evidence" value="ECO:0007669"/>
    <property type="project" value="UniProtKB-UniPathway"/>
</dbReference>
<dbReference type="GO" id="GO:0019288">
    <property type="term" value="P:isopentenyl diphosphate biosynthetic process, methylerythritol 4-phosphate pathway"/>
    <property type="evidence" value="ECO:0007669"/>
    <property type="project" value="TreeGrafter"/>
</dbReference>
<dbReference type="GO" id="GO:0016114">
    <property type="term" value="P:terpenoid biosynthetic process"/>
    <property type="evidence" value="ECO:0007669"/>
    <property type="project" value="UniProtKB-UniRule"/>
</dbReference>
<dbReference type="GO" id="GO:0009228">
    <property type="term" value="P:thiamine biosynthetic process"/>
    <property type="evidence" value="ECO:0007669"/>
    <property type="project" value="UniProtKB-UniRule"/>
</dbReference>
<dbReference type="CDD" id="cd02007">
    <property type="entry name" value="TPP_DXS"/>
    <property type="match status" value="1"/>
</dbReference>
<dbReference type="CDD" id="cd07033">
    <property type="entry name" value="TPP_PYR_DXS_TK_like"/>
    <property type="match status" value="1"/>
</dbReference>
<dbReference type="FunFam" id="3.40.50.920:FF:000002">
    <property type="entry name" value="1-deoxy-D-xylulose-5-phosphate synthase"/>
    <property type="match status" value="1"/>
</dbReference>
<dbReference type="FunFam" id="3.40.50.970:FF:000005">
    <property type="entry name" value="1-deoxy-D-xylulose-5-phosphate synthase"/>
    <property type="match status" value="1"/>
</dbReference>
<dbReference type="Gene3D" id="3.40.50.920">
    <property type="match status" value="1"/>
</dbReference>
<dbReference type="Gene3D" id="3.40.50.970">
    <property type="match status" value="2"/>
</dbReference>
<dbReference type="HAMAP" id="MF_00315">
    <property type="entry name" value="DXP_synth"/>
    <property type="match status" value="1"/>
</dbReference>
<dbReference type="InterPro" id="IPR005477">
    <property type="entry name" value="Dxylulose-5-P_synthase"/>
</dbReference>
<dbReference type="InterPro" id="IPR029061">
    <property type="entry name" value="THDP-binding"/>
</dbReference>
<dbReference type="InterPro" id="IPR009014">
    <property type="entry name" value="Transketo_C/PFOR_II"/>
</dbReference>
<dbReference type="InterPro" id="IPR005475">
    <property type="entry name" value="Transketolase-like_Pyr-bd"/>
</dbReference>
<dbReference type="InterPro" id="IPR020826">
    <property type="entry name" value="Transketolase_BS"/>
</dbReference>
<dbReference type="InterPro" id="IPR033248">
    <property type="entry name" value="Transketolase_C"/>
</dbReference>
<dbReference type="InterPro" id="IPR049557">
    <property type="entry name" value="Transketolase_CS"/>
</dbReference>
<dbReference type="NCBIfam" id="TIGR00204">
    <property type="entry name" value="dxs"/>
    <property type="match status" value="1"/>
</dbReference>
<dbReference type="NCBIfam" id="NF003933">
    <property type="entry name" value="PRK05444.2-2"/>
    <property type="match status" value="1"/>
</dbReference>
<dbReference type="PANTHER" id="PTHR43322">
    <property type="entry name" value="1-D-DEOXYXYLULOSE 5-PHOSPHATE SYNTHASE-RELATED"/>
    <property type="match status" value="1"/>
</dbReference>
<dbReference type="PANTHER" id="PTHR43322:SF5">
    <property type="entry name" value="1-DEOXY-D-XYLULOSE-5-PHOSPHATE SYNTHASE, CHLOROPLASTIC"/>
    <property type="match status" value="1"/>
</dbReference>
<dbReference type="Pfam" id="PF13292">
    <property type="entry name" value="DXP_synthase_N"/>
    <property type="match status" value="1"/>
</dbReference>
<dbReference type="Pfam" id="PF02779">
    <property type="entry name" value="Transket_pyr"/>
    <property type="match status" value="1"/>
</dbReference>
<dbReference type="Pfam" id="PF02780">
    <property type="entry name" value="Transketolase_C"/>
    <property type="match status" value="1"/>
</dbReference>
<dbReference type="SMART" id="SM00861">
    <property type="entry name" value="Transket_pyr"/>
    <property type="match status" value="1"/>
</dbReference>
<dbReference type="SUPFAM" id="SSF52518">
    <property type="entry name" value="Thiamin diphosphate-binding fold (THDP-binding)"/>
    <property type="match status" value="2"/>
</dbReference>
<dbReference type="SUPFAM" id="SSF52922">
    <property type="entry name" value="TK C-terminal domain-like"/>
    <property type="match status" value="1"/>
</dbReference>
<dbReference type="PROSITE" id="PS00801">
    <property type="entry name" value="TRANSKETOLASE_1"/>
    <property type="match status" value="1"/>
</dbReference>
<dbReference type="PROSITE" id="PS00802">
    <property type="entry name" value="TRANSKETOLASE_2"/>
    <property type="match status" value="1"/>
</dbReference>
<keyword id="KW-0414">Isoprene biosynthesis</keyword>
<keyword id="KW-0460">Magnesium</keyword>
<keyword id="KW-0479">Metal-binding</keyword>
<keyword id="KW-0784">Thiamine biosynthesis</keyword>
<keyword id="KW-0786">Thiamine pyrophosphate</keyword>
<keyword id="KW-0808">Transferase</keyword>
<name>DXS_ECOSE</name>
<reference key="1">
    <citation type="journal article" date="2008" name="DNA Res.">
        <title>Complete genome sequence and comparative analysis of the wild-type commensal Escherichia coli strain SE11 isolated from a healthy adult.</title>
        <authorList>
            <person name="Oshima K."/>
            <person name="Toh H."/>
            <person name="Ogura Y."/>
            <person name="Sasamoto H."/>
            <person name="Morita H."/>
            <person name="Park S.-H."/>
            <person name="Ooka T."/>
            <person name="Iyoda S."/>
            <person name="Taylor T.D."/>
            <person name="Hayashi T."/>
            <person name="Itoh K."/>
            <person name="Hattori M."/>
        </authorList>
    </citation>
    <scope>NUCLEOTIDE SEQUENCE [LARGE SCALE GENOMIC DNA]</scope>
    <source>
        <strain>SE11</strain>
    </source>
</reference>
<feature type="chain" id="PRO_1000115740" description="1-deoxy-D-xylulose-5-phosphate synthase">
    <location>
        <begin position="1"/>
        <end position="620"/>
    </location>
</feature>
<feature type="binding site" evidence="1">
    <location>
        <position position="80"/>
    </location>
    <ligand>
        <name>thiamine diphosphate</name>
        <dbReference type="ChEBI" id="CHEBI:58937"/>
    </ligand>
</feature>
<feature type="binding site" evidence="1">
    <location>
        <begin position="121"/>
        <end position="123"/>
    </location>
    <ligand>
        <name>thiamine diphosphate</name>
        <dbReference type="ChEBI" id="CHEBI:58937"/>
    </ligand>
</feature>
<feature type="binding site" evidence="1">
    <location>
        <position position="152"/>
    </location>
    <ligand>
        <name>Mg(2+)</name>
        <dbReference type="ChEBI" id="CHEBI:18420"/>
    </ligand>
</feature>
<feature type="binding site" evidence="1">
    <location>
        <begin position="153"/>
        <end position="154"/>
    </location>
    <ligand>
        <name>thiamine diphosphate</name>
        <dbReference type="ChEBI" id="CHEBI:58937"/>
    </ligand>
</feature>
<feature type="binding site" evidence="1">
    <location>
        <position position="181"/>
    </location>
    <ligand>
        <name>Mg(2+)</name>
        <dbReference type="ChEBI" id="CHEBI:18420"/>
    </ligand>
</feature>
<feature type="binding site" evidence="1">
    <location>
        <position position="181"/>
    </location>
    <ligand>
        <name>thiamine diphosphate</name>
        <dbReference type="ChEBI" id="CHEBI:58937"/>
    </ligand>
</feature>
<feature type="binding site" evidence="1">
    <location>
        <position position="288"/>
    </location>
    <ligand>
        <name>thiamine diphosphate</name>
        <dbReference type="ChEBI" id="CHEBI:58937"/>
    </ligand>
</feature>
<feature type="binding site" evidence="1">
    <location>
        <position position="370"/>
    </location>
    <ligand>
        <name>thiamine diphosphate</name>
        <dbReference type="ChEBI" id="CHEBI:58937"/>
    </ligand>
</feature>
<protein>
    <recommendedName>
        <fullName evidence="1">1-deoxy-D-xylulose-5-phosphate synthase</fullName>
        <ecNumber evidence="1">2.2.1.7</ecNumber>
    </recommendedName>
    <alternativeName>
        <fullName evidence="1">1-deoxyxylulose-5-phosphate synthase</fullName>
        <shortName evidence="1">DXP synthase</shortName>
        <shortName evidence="1">DXPS</shortName>
    </alternativeName>
</protein>
<proteinExistence type="inferred from homology"/>
<gene>
    <name evidence="1" type="primary">dxs</name>
    <name type="ordered locus">ECSE_0442</name>
</gene>
<accession>B6HZM1</accession>
<sequence>MSFDIAKYPTLALVDSTQELRLLPKESLPKLCDELRRYLLDSVSRSSGHFASGLGTVELTVALHYVYNTPFDQLIWDVGHQAYPHKILTGRRDKIGTIRQKGGLHPFPWRGESEYDVLSVGHSSTSISAGIGIAVAAEKEGKNRRTVCVIGDGAITAGMAFEAMNHAGDIRPDMLVVLNDNEMSISENVGALNNHLAQLLSGKLYSSLREGGKKVFSGVPPIKELLKRTEEHIKGMVVPGTLFEELGFNYIGPVDGHDVLGLITTLKNMRDLKGPQFLHIMTKKGRGYEPAEKDPITFHAVPKFDPSSGCLPKSSGGLPSYSKIFGDWLCETAAKDNKLMAITPAMREGSGMVEFSRKFPDRYFDVAIAEQHAVTFAAGLAIGGYKPIVAIYSTFLQRAYDQVLHDVAIQKLPVLFAIDRAGIVGADGQTHQGAFDLSYLRCIPEMVIMTPSDENECRQMLYTGYHYNDGPSAVRYPRGNAVGVELTPLEKLPIGKGIVKRRGEKLAILNFGTLMPDAAKVAESLNATLVDMRFVKPLDEALILEMAASHEALVTVEENAIMGGAGSGVNEVLMAHRKPVPVLNIGLPDFFIPQGTQEEMRAELGLDAAGMEAKIKAWLA</sequence>
<evidence type="ECO:0000255" key="1">
    <source>
        <dbReference type="HAMAP-Rule" id="MF_00315"/>
    </source>
</evidence>
<comment type="function">
    <text evidence="1">Catalyzes the acyloin condensation reaction between C atoms 2 and 3 of pyruvate and glyceraldehyde 3-phosphate to yield 1-deoxy-D-xylulose-5-phosphate (DXP).</text>
</comment>
<comment type="catalytic activity">
    <reaction evidence="1">
        <text>D-glyceraldehyde 3-phosphate + pyruvate + H(+) = 1-deoxy-D-xylulose 5-phosphate + CO2</text>
        <dbReference type="Rhea" id="RHEA:12605"/>
        <dbReference type="ChEBI" id="CHEBI:15361"/>
        <dbReference type="ChEBI" id="CHEBI:15378"/>
        <dbReference type="ChEBI" id="CHEBI:16526"/>
        <dbReference type="ChEBI" id="CHEBI:57792"/>
        <dbReference type="ChEBI" id="CHEBI:59776"/>
        <dbReference type="EC" id="2.2.1.7"/>
    </reaction>
</comment>
<comment type="cofactor">
    <cofactor evidence="1">
        <name>Mg(2+)</name>
        <dbReference type="ChEBI" id="CHEBI:18420"/>
    </cofactor>
    <text evidence="1">Binds 1 Mg(2+) ion per subunit.</text>
</comment>
<comment type="cofactor">
    <cofactor evidence="1">
        <name>thiamine diphosphate</name>
        <dbReference type="ChEBI" id="CHEBI:58937"/>
    </cofactor>
    <text evidence="1">Binds 1 thiamine pyrophosphate per subunit.</text>
</comment>
<comment type="pathway">
    <text evidence="1">Metabolic intermediate biosynthesis; 1-deoxy-D-xylulose 5-phosphate biosynthesis; 1-deoxy-D-xylulose 5-phosphate from D-glyceraldehyde 3-phosphate and pyruvate: step 1/1.</text>
</comment>
<comment type="subunit">
    <text evidence="1">Homodimer.</text>
</comment>
<comment type="similarity">
    <text evidence="1">Belongs to the transketolase family. DXPS subfamily.</text>
</comment>